<sequence length="379" mass="42533">MKILRKNHPLLKIVNHSFIDLPTPSNISSWWNFGSLLGMCLVIQILTGLFLAMHYTSDTTTAFSSVAHICRDVNYGWLIRYLHANGASMFFICLFIHVGRGIYYGSYVLSETWNIGIILLLTTMATAFVGYVLPWGQMSFWGATVITNLLSAIPYIGNTLVEWIWGGFSVDKATLTRFFAFHFILPFIIAAFALVHLLFLHETGSNNPSGLNSDSDKIPFHPYYTIKDLLGIFLLLLILMALALFFPDVLGDPDNFTPANPLNTPAHIKPEWYFLFAYAILRSIPNKLGGVLALILSILILAAFPLLNTSKQQGLIFRPVTQTIYWIFIANLLVLTWIGGQPVEYPFTMIGQIASVTYFTIITILIPISNTIENNIIKL</sequence>
<feature type="chain" id="PRO_0000254978" description="Cytochrome b">
    <location>
        <begin position="1"/>
        <end position="379"/>
    </location>
</feature>
<feature type="transmembrane region" description="Helical" evidence="2">
    <location>
        <begin position="33"/>
        <end position="53"/>
    </location>
</feature>
<feature type="transmembrane region" description="Helical" evidence="2">
    <location>
        <begin position="77"/>
        <end position="98"/>
    </location>
</feature>
<feature type="transmembrane region" description="Helical" evidence="2">
    <location>
        <begin position="113"/>
        <end position="133"/>
    </location>
</feature>
<feature type="transmembrane region" description="Helical" evidence="2">
    <location>
        <begin position="178"/>
        <end position="198"/>
    </location>
</feature>
<feature type="transmembrane region" description="Helical" evidence="2">
    <location>
        <begin position="226"/>
        <end position="246"/>
    </location>
</feature>
<feature type="transmembrane region" description="Helical" evidence="2">
    <location>
        <begin position="288"/>
        <end position="308"/>
    </location>
</feature>
<feature type="transmembrane region" description="Helical" evidence="2">
    <location>
        <begin position="320"/>
        <end position="340"/>
    </location>
</feature>
<feature type="transmembrane region" description="Helical" evidence="2">
    <location>
        <begin position="347"/>
        <end position="367"/>
    </location>
</feature>
<feature type="binding site" description="axial binding residue" evidence="2">
    <location>
        <position position="83"/>
    </location>
    <ligand>
        <name>heme b</name>
        <dbReference type="ChEBI" id="CHEBI:60344"/>
        <label>b562</label>
    </ligand>
    <ligandPart>
        <name>Fe</name>
        <dbReference type="ChEBI" id="CHEBI:18248"/>
    </ligandPart>
</feature>
<feature type="binding site" description="axial binding residue" evidence="2">
    <location>
        <position position="97"/>
    </location>
    <ligand>
        <name>heme b</name>
        <dbReference type="ChEBI" id="CHEBI:60344"/>
        <label>b566</label>
    </ligand>
    <ligandPart>
        <name>Fe</name>
        <dbReference type="ChEBI" id="CHEBI:18248"/>
    </ligandPart>
</feature>
<feature type="binding site" description="axial binding residue" evidence="2">
    <location>
        <position position="182"/>
    </location>
    <ligand>
        <name>heme b</name>
        <dbReference type="ChEBI" id="CHEBI:60344"/>
        <label>b562</label>
    </ligand>
    <ligandPart>
        <name>Fe</name>
        <dbReference type="ChEBI" id="CHEBI:18248"/>
    </ligandPart>
</feature>
<feature type="binding site" description="axial binding residue" evidence="2">
    <location>
        <position position="196"/>
    </location>
    <ligand>
        <name>heme b</name>
        <dbReference type="ChEBI" id="CHEBI:60344"/>
        <label>b566</label>
    </ligand>
    <ligandPart>
        <name>Fe</name>
        <dbReference type="ChEBI" id="CHEBI:18248"/>
    </ligandPart>
</feature>
<feature type="binding site" evidence="2">
    <location>
        <position position="201"/>
    </location>
    <ligand>
        <name>a ubiquinone</name>
        <dbReference type="ChEBI" id="CHEBI:16389"/>
    </ligand>
</feature>
<reference key="1">
    <citation type="journal article" date="2005" name="J. Mammal.">
        <title>A new species of Akodon (Rodentia, Cricetidae) from the Northern Campos grasslands of Argentina.</title>
        <authorList>
            <person name="Pardinas U.F."/>
            <person name="D'Elia G."/>
            <person name="Cirignoli S."/>
            <person name="Suarez P."/>
        </authorList>
    </citation>
    <scope>NUCLEOTIDE SEQUENCE [GENOMIC DNA]</scope>
</reference>
<name>CYB_AKOPH</name>
<proteinExistence type="inferred from homology"/>
<keyword id="KW-0249">Electron transport</keyword>
<keyword id="KW-0349">Heme</keyword>
<keyword id="KW-0408">Iron</keyword>
<keyword id="KW-0472">Membrane</keyword>
<keyword id="KW-0479">Metal-binding</keyword>
<keyword id="KW-0496">Mitochondrion</keyword>
<keyword id="KW-0999">Mitochondrion inner membrane</keyword>
<keyword id="KW-0679">Respiratory chain</keyword>
<keyword id="KW-0812">Transmembrane</keyword>
<keyword id="KW-1133">Transmembrane helix</keyword>
<keyword id="KW-0813">Transport</keyword>
<keyword id="KW-0830">Ubiquinone</keyword>
<gene>
    <name type="primary">MT-CYB</name>
    <name type="synonym">COB</name>
    <name type="synonym">CYTB</name>
    <name type="synonym">MTCYB</name>
</gene>
<geneLocation type="mitochondrion"/>
<accession>Q4QXK3</accession>
<comment type="function">
    <text evidence="2">Component of the ubiquinol-cytochrome c reductase complex (complex III or cytochrome b-c1 complex) that is part of the mitochondrial respiratory chain. The b-c1 complex mediates electron transfer from ubiquinol to cytochrome c. Contributes to the generation of a proton gradient across the mitochondrial membrane that is then used for ATP synthesis.</text>
</comment>
<comment type="cofactor">
    <cofactor evidence="2">
        <name>heme b</name>
        <dbReference type="ChEBI" id="CHEBI:60344"/>
    </cofactor>
    <text evidence="2">Binds 2 heme b groups non-covalently.</text>
</comment>
<comment type="subunit">
    <text evidence="2">The cytochrome bc1 complex contains 11 subunits: 3 respiratory subunits (MT-CYB, CYC1 and UQCRFS1), 2 core proteins (UQCRC1 and UQCRC2) and 6 low-molecular weight proteins (UQCRH/QCR6, UQCRB/QCR7, UQCRQ/QCR8, UQCR10/QCR9, UQCR11/QCR10 and a cleavage product of UQCRFS1). This cytochrome bc1 complex then forms a dimer.</text>
</comment>
<comment type="subcellular location">
    <subcellularLocation>
        <location evidence="2">Mitochondrion inner membrane</location>
        <topology evidence="2">Multi-pass membrane protein</topology>
    </subcellularLocation>
</comment>
<comment type="miscellaneous">
    <text evidence="1">Heme 1 (or BL or b562) is low-potential and absorbs at about 562 nm, and heme 2 (or BH or b566) is high-potential and absorbs at about 566 nm.</text>
</comment>
<comment type="similarity">
    <text evidence="3 4">Belongs to the cytochrome b family.</text>
</comment>
<comment type="caution">
    <text evidence="2">The full-length protein contains only eight transmembrane helices, not nine as predicted by bioinformatics tools.</text>
</comment>
<dbReference type="EMBL" id="AY702965">
    <property type="protein sequence ID" value="AAW31492.1"/>
    <property type="molecule type" value="Genomic_DNA"/>
</dbReference>
<dbReference type="EMBL" id="AY702966">
    <property type="protein sequence ID" value="AAW31493.1"/>
    <property type="molecule type" value="Genomic_DNA"/>
</dbReference>
<dbReference type="SMR" id="Q4QXK3"/>
<dbReference type="GO" id="GO:0005743">
    <property type="term" value="C:mitochondrial inner membrane"/>
    <property type="evidence" value="ECO:0007669"/>
    <property type="project" value="UniProtKB-SubCell"/>
</dbReference>
<dbReference type="GO" id="GO:0045275">
    <property type="term" value="C:respiratory chain complex III"/>
    <property type="evidence" value="ECO:0007669"/>
    <property type="project" value="InterPro"/>
</dbReference>
<dbReference type="GO" id="GO:0046872">
    <property type="term" value="F:metal ion binding"/>
    <property type="evidence" value="ECO:0007669"/>
    <property type="project" value="UniProtKB-KW"/>
</dbReference>
<dbReference type="GO" id="GO:0008121">
    <property type="term" value="F:ubiquinol-cytochrome-c reductase activity"/>
    <property type="evidence" value="ECO:0007669"/>
    <property type="project" value="InterPro"/>
</dbReference>
<dbReference type="GO" id="GO:0006122">
    <property type="term" value="P:mitochondrial electron transport, ubiquinol to cytochrome c"/>
    <property type="evidence" value="ECO:0007669"/>
    <property type="project" value="TreeGrafter"/>
</dbReference>
<dbReference type="CDD" id="cd00290">
    <property type="entry name" value="cytochrome_b_C"/>
    <property type="match status" value="1"/>
</dbReference>
<dbReference type="CDD" id="cd00284">
    <property type="entry name" value="Cytochrome_b_N"/>
    <property type="match status" value="1"/>
</dbReference>
<dbReference type="FunFam" id="1.20.810.10:FF:000002">
    <property type="entry name" value="Cytochrome b"/>
    <property type="match status" value="1"/>
</dbReference>
<dbReference type="Gene3D" id="1.20.810.10">
    <property type="entry name" value="Cytochrome Bc1 Complex, Chain C"/>
    <property type="match status" value="1"/>
</dbReference>
<dbReference type="InterPro" id="IPR005798">
    <property type="entry name" value="Cyt_b/b6_C"/>
</dbReference>
<dbReference type="InterPro" id="IPR036150">
    <property type="entry name" value="Cyt_b/b6_C_sf"/>
</dbReference>
<dbReference type="InterPro" id="IPR005797">
    <property type="entry name" value="Cyt_b/b6_N"/>
</dbReference>
<dbReference type="InterPro" id="IPR027387">
    <property type="entry name" value="Cytb/b6-like_sf"/>
</dbReference>
<dbReference type="InterPro" id="IPR030689">
    <property type="entry name" value="Cytochrome_b"/>
</dbReference>
<dbReference type="InterPro" id="IPR048260">
    <property type="entry name" value="Cytochrome_b_C_euk/bac"/>
</dbReference>
<dbReference type="InterPro" id="IPR048259">
    <property type="entry name" value="Cytochrome_b_N_euk/bac"/>
</dbReference>
<dbReference type="InterPro" id="IPR016174">
    <property type="entry name" value="Di-haem_cyt_TM"/>
</dbReference>
<dbReference type="PANTHER" id="PTHR19271">
    <property type="entry name" value="CYTOCHROME B"/>
    <property type="match status" value="1"/>
</dbReference>
<dbReference type="PANTHER" id="PTHR19271:SF16">
    <property type="entry name" value="CYTOCHROME B"/>
    <property type="match status" value="1"/>
</dbReference>
<dbReference type="Pfam" id="PF00032">
    <property type="entry name" value="Cytochrom_B_C"/>
    <property type="match status" value="1"/>
</dbReference>
<dbReference type="Pfam" id="PF00033">
    <property type="entry name" value="Cytochrome_B"/>
    <property type="match status" value="1"/>
</dbReference>
<dbReference type="PIRSF" id="PIRSF038885">
    <property type="entry name" value="COB"/>
    <property type="match status" value="1"/>
</dbReference>
<dbReference type="SUPFAM" id="SSF81648">
    <property type="entry name" value="a domain/subunit of cytochrome bc1 complex (Ubiquinol-cytochrome c reductase)"/>
    <property type="match status" value="1"/>
</dbReference>
<dbReference type="SUPFAM" id="SSF81342">
    <property type="entry name" value="Transmembrane di-heme cytochromes"/>
    <property type="match status" value="1"/>
</dbReference>
<dbReference type="PROSITE" id="PS51003">
    <property type="entry name" value="CYTB_CTER"/>
    <property type="match status" value="1"/>
</dbReference>
<dbReference type="PROSITE" id="PS51002">
    <property type="entry name" value="CYTB_NTER"/>
    <property type="match status" value="1"/>
</dbReference>
<protein>
    <recommendedName>
        <fullName>Cytochrome b</fullName>
    </recommendedName>
    <alternativeName>
        <fullName>Complex III subunit 3</fullName>
    </alternativeName>
    <alternativeName>
        <fullName>Complex III subunit III</fullName>
    </alternativeName>
    <alternativeName>
        <fullName>Cytochrome b-c1 complex subunit 3</fullName>
    </alternativeName>
    <alternativeName>
        <fullName>Ubiquinol-cytochrome-c reductase complex cytochrome b subunit</fullName>
    </alternativeName>
</protein>
<evidence type="ECO:0000250" key="1"/>
<evidence type="ECO:0000250" key="2">
    <source>
        <dbReference type="UniProtKB" id="P00157"/>
    </source>
</evidence>
<evidence type="ECO:0000255" key="3">
    <source>
        <dbReference type="PROSITE-ProRule" id="PRU00967"/>
    </source>
</evidence>
<evidence type="ECO:0000255" key="4">
    <source>
        <dbReference type="PROSITE-ProRule" id="PRU00968"/>
    </source>
</evidence>
<organism>
    <name type="scientific">Akodon philipmyersi</name>
    <name type="common">Myers' grass mouse</name>
    <dbReference type="NCBI Taxonomy" id="306435"/>
    <lineage>
        <taxon>Eukaryota</taxon>
        <taxon>Metazoa</taxon>
        <taxon>Chordata</taxon>
        <taxon>Craniata</taxon>
        <taxon>Vertebrata</taxon>
        <taxon>Euteleostomi</taxon>
        <taxon>Mammalia</taxon>
        <taxon>Eutheria</taxon>
        <taxon>Euarchontoglires</taxon>
        <taxon>Glires</taxon>
        <taxon>Rodentia</taxon>
        <taxon>Myomorpha</taxon>
        <taxon>Muroidea</taxon>
        <taxon>Cricetidae</taxon>
        <taxon>Sigmodontinae</taxon>
        <taxon>Akodon</taxon>
    </lineage>
</organism>